<feature type="chain" id="PRO_0000157665" description="Large ribosomal subunit protein P2">
    <location>
        <begin position="1"/>
        <end position="112"/>
    </location>
</feature>
<feature type="region of interest" description="Disordered" evidence="2">
    <location>
        <begin position="81"/>
        <end position="112"/>
    </location>
</feature>
<feature type="compositionally biased region" description="Basic and acidic residues" evidence="2">
    <location>
        <begin position="84"/>
        <end position="95"/>
    </location>
</feature>
<feature type="compositionally biased region" description="Acidic residues" evidence="2">
    <location>
        <begin position="96"/>
        <end position="106"/>
    </location>
</feature>
<sequence>MAMKYVAAYLMCVLGGNENPSTKEVKNVLGAVNADVEDEVLNNFIDSLKGKSCHELITDGLKKLQNIGGGVAAAPAGAAAVETAEAKKEDKKEEKKEEEEEEEDDLGFSLFG</sequence>
<name>RLA2_PLAF7</name>
<reference key="1">
    <citation type="journal article" date="1998" name="Exp. Parasitol.">
        <title>Plasmodium falciparum: ribosomal P2 protein gene expression is independent of the developmentally regulated rRNAs.</title>
        <authorList>
            <person name="Fidock D.A."/>
            <person name="Nguyen T.V."/>
            <person name="Dodemont H.J."/>
            <person name="Eling W.M."/>
            <person name="James A.A."/>
        </authorList>
    </citation>
    <scope>NUCLEOTIDE SEQUENCE [GENOMIC DNA]</scope>
    <source>
        <strain>HB3</strain>
    </source>
</reference>
<reference key="2">
    <citation type="journal article" date="1999" name="Nature">
        <title>The complete nucleotide sequence of chromosome 3 of Plasmodium falciparum.</title>
        <authorList>
            <person name="Bowman S."/>
            <person name="Lawson D."/>
            <person name="Basham D."/>
            <person name="Brown D."/>
            <person name="Chillingworth T."/>
            <person name="Churcher C.M."/>
            <person name="Craig A."/>
            <person name="Davies R.M."/>
            <person name="Devlin K."/>
            <person name="Feltwell T."/>
            <person name="Gentles S."/>
            <person name="Gwilliam R."/>
            <person name="Hamlin N."/>
            <person name="Harris D."/>
            <person name="Holroyd S."/>
            <person name="Hornsby T."/>
            <person name="Horrocks P."/>
            <person name="Jagels K."/>
            <person name="Jassal B."/>
            <person name="Kyes S."/>
            <person name="McLean J."/>
            <person name="Moule S."/>
            <person name="Mungall K.L."/>
            <person name="Murphy L."/>
            <person name="Oliver K."/>
            <person name="Quail M.A."/>
            <person name="Rajandream M.A."/>
            <person name="Rutter S."/>
            <person name="Skelton J."/>
            <person name="Squares R."/>
            <person name="Squares S."/>
            <person name="Sulston J.E."/>
            <person name="Whitehead S."/>
            <person name="Woodward J.R."/>
            <person name="Newbold C."/>
            <person name="Barrell B.G."/>
        </authorList>
    </citation>
    <scope>NUCLEOTIDE SEQUENCE [LARGE SCALE GENOMIC DNA]</scope>
    <source>
        <strain>3D7</strain>
    </source>
</reference>
<reference key="3">
    <citation type="journal article" date="2002" name="Nature">
        <title>Genome sequence of the human malaria parasite Plasmodium falciparum.</title>
        <authorList>
            <person name="Gardner M.J."/>
            <person name="Hall N."/>
            <person name="Fung E."/>
            <person name="White O."/>
            <person name="Berriman M."/>
            <person name="Hyman R.W."/>
            <person name="Carlton J.M."/>
            <person name="Pain A."/>
            <person name="Nelson K.E."/>
            <person name="Bowman S."/>
            <person name="Paulsen I.T."/>
            <person name="James K.D."/>
            <person name="Eisen J.A."/>
            <person name="Rutherford K.M."/>
            <person name="Salzberg S.L."/>
            <person name="Craig A."/>
            <person name="Kyes S."/>
            <person name="Chan M.-S."/>
            <person name="Nene V."/>
            <person name="Shallom S.J."/>
            <person name="Suh B."/>
            <person name="Peterson J."/>
            <person name="Angiuoli S."/>
            <person name="Pertea M."/>
            <person name="Allen J."/>
            <person name="Selengut J."/>
            <person name="Haft D."/>
            <person name="Mather M.W."/>
            <person name="Vaidya A.B."/>
            <person name="Martin D.M.A."/>
            <person name="Fairlamb A.H."/>
            <person name="Fraunholz M.J."/>
            <person name="Roos D.S."/>
            <person name="Ralph S.A."/>
            <person name="McFadden G.I."/>
            <person name="Cummings L.M."/>
            <person name="Subramanian G.M."/>
            <person name="Mungall C."/>
            <person name="Venter J.C."/>
            <person name="Carucci D.J."/>
            <person name="Hoffman S.L."/>
            <person name="Newbold C."/>
            <person name="Davis R.W."/>
            <person name="Fraser C.M."/>
            <person name="Barrell B.G."/>
        </authorList>
    </citation>
    <scope>NUCLEOTIDE SEQUENCE [LARGE SCALE GENOMIC DNA]</scope>
    <source>
        <strain>3D7</strain>
    </source>
</reference>
<reference key="4">
    <citation type="journal article" date="2002" name="Nature">
        <title>Sequence of Plasmodium falciparum chromosomes 1, 3-9 and 13.</title>
        <authorList>
            <person name="Hall N."/>
            <person name="Pain A."/>
            <person name="Berriman M."/>
            <person name="Churcher C.M."/>
            <person name="Harris B."/>
            <person name="Harris D."/>
            <person name="Mungall K.L."/>
            <person name="Bowman S."/>
            <person name="Atkin R."/>
            <person name="Baker S."/>
            <person name="Barron A."/>
            <person name="Brooks K."/>
            <person name="Buckee C.O."/>
            <person name="Burrows C."/>
            <person name="Cherevach I."/>
            <person name="Chillingworth C."/>
            <person name="Chillingworth T."/>
            <person name="Christodoulou Z."/>
            <person name="Clark L."/>
            <person name="Clark R."/>
            <person name="Corton C."/>
            <person name="Cronin A."/>
            <person name="Davies R.M."/>
            <person name="Davis P."/>
            <person name="Dear P."/>
            <person name="Dearden F."/>
            <person name="Doggett J."/>
            <person name="Feltwell T."/>
            <person name="Goble A."/>
            <person name="Goodhead I."/>
            <person name="Gwilliam R."/>
            <person name="Hamlin N."/>
            <person name="Hance Z."/>
            <person name="Harper D."/>
            <person name="Hauser H."/>
            <person name="Hornsby T."/>
            <person name="Holroyd S."/>
            <person name="Horrocks P."/>
            <person name="Humphray S."/>
            <person name="Jagels K."/>
            <person name="James K.D."/>
            <person name="Johnson D."/>
            <person name="Kerhornou A."/>
            <person name="Knights A."/>
            <person name="Konfortov B."/>
            <person name="Kyes S."/>
            <person name="Larke N."/>
            <person name="Lawson D."/>
            <person name="Lennard N."/>
            <person name="Line A."/>
            <person name="Maddison M."/>
            <person name="Mclean J."/>
            <person name="Mooney P."/>
            <person name="Moule S."/>
            <person name="Murphy L."/>
            <person name="Oliver K."/>
            <person name="Ormond D."/>
            <person name="Price C."/>
            <person name="Quail M.A."/>
            <person name="Rabbinowitsch E."/>
            <person name="Rajandream M.A."/>
            <person name="Rutter S."/>
            <person name="Rutherford K.M."/>
            <person name="Sanders M."/>
            <person name="Simmonds M."/>
            <person name="Seeger K."/>
            <person name="Sharp S."/>
            <person name="Smith R."/>
            <person name="Squares R."/>
            <person name="Squares S."/>
            <person name="Stevens K."/>
            <person name="Taylor K."/>
            <person name="Tivey A."/>
            <person name="Unwin L."/>
            <person name="Whitehead S."/>
            <person name="Woodward J.R."/>
            <person name="Sulston J.E."/>
            <person name="Craig A."/>
            <person name="Newbold C."/>
            <person name="Barrell B.G."/>
        </authorList>
    </citation>
    <scope>NUCLEOTIDE SEQUENCE [LARGE SCALE GENOMIC DNA]</scope>
    <source>
        <strain>3D7</strain>
    </source>
</reference>
<gene>
    <name type="primary">MAL3P3.19</name>
</gene>
<comment type="function">
    <text evidence="1">Plays an important role in the elongation step of protein synthesis.</text>
</comment>
<comment type="subunit">
    <text evidence="1">P1 and P2 exist as dimers at the large ribosomal subunit.</text>
</comment>
<comment type="PTM">
    <text evidence="1">Phosphorylated.</text>
</comment>
<comment type="similarity">
    <text evidence="3">Belongs to the eukaryotic ribosomal protein P1/P2 family.</text>
</comment>
<dbReference type="EMBL" id="U78753">
    <property type="protein sequence ID" value="AAB51131.1"/>
    <property type="molecule type" value="Genomic_DNA"/>
</dbReference>
<dbReference type="EMBL" id="AL844502">
    <property type="protein sequence ID" value="CAB11115.1"/>
    <property type="molecule type" value="Genomic_DNA"/>
</dbReference>
<dbReference type="PIR" id="T18436">
    <property type="entry name" value="T18436"/>
</dbReference>
<dbReference type="RefSeq" id="XP_001351169.1">
    <property type="nucleotide sequence ID" value="XM_001351133.1"/>
</dbReference>
<dbReference type="BMRB" id="O00806"/>
<dbReference type="SMR" id="O00806"/>
<dbReference type="BioGRID" id="1209662">
    <property type="interactions" value="1"/>
</dbReference>
<dbReference type="FunCoup" id="O00806">
    <property type="interactions" value="237"/>
</dbReference>
<dbReference type="STRING" id="36329.O00806"/>
<dbReference type="SwissPalm" id="O00806"/>
<dbReference type="PaxDb" id="5833-PFC0400w"/>
<dbReference type="EnsemblProtists" id="CAB11115">
    <property type="protein sequence ID" value="CAB11115"/>
    <property type="gene ID" value="PF3D7_0309600"/>
</dbReference>
<dbReference type="KEGG" id="pfa:PF3D7_0309600"/>
<dbReference type="VEuPathDB" id="PlasmoDB:PF3D7_0309600"/>
<dbReference type="HOGENOM" id="CLU_114656_0_0_1"/>
<dbReference type="InParanoid" id="O00806"/>
<dbReference type="OMA" id="MKVIASY"/>
<dbReference type="OrthoDB" id="377779at2759"/>
<dbReference type="PhylomeDB" id="O00806"/>
<dbReference type="Reactome" id="R-PFA-156827">
    <property type="pathway name" value="L13a-mediated translational silencing of Ceruloplasmin expression"/>
</dbReference>
<dbReference type="Reactome" id="R-PFA-1799339">
    <property type="pathway name" value="SRP-dependent cotranslational protein targeting to membrane"/>
</dbReference>
<dbReference type="Reactome" id="R-PFA-72689">
    <property type="pathway name" value="Formation of a pool of free 40S subunits"/>
</dbReference>
<dbReference type="Reactome" id="R-PFA-72706">
    <property type="pathway name" value="GTP hydrolysis and joining of the 60S ribosomal subunit"/>
</dbReference>
<dbReference type="Reactome" id="R-PFA-975956">
    <property type="pathway name" value="Nonsense Mediated Decay (NMD) independent of the Exon Junction Complex (EJC)"/>
</dbReference>
<dbReference type="Reactome" id="R-PFA-975957">
    <property type="pathway name" value="Nonsense Mediated Decay (NMD) enhanced by the Exon Junction Complex (EJC)"/>
</dbReference>
<dbReference type="Proteomes" id="UP000001450">
    <property type="component" value="Chromosome 3"/>
</dbReference>
<dbReference type="GO" id="GO:0022625">
    <property type="term" value="C:cytosolic large ribosomal subunit"/>
    <property type="evidence" value="ECO:0007669"/>
    <property type="project" value="InterPro"/>
</dbReference>
<dbReference type="GO" id="GO:0003735">
    <property type="term" value="F:structural constituent of ribosome"/>
    <property type="evidence" value="ECO:0007669"/>
    <property type="project" value="InterPro"/>
</dbReference>
<dbReference type="GO" id="GO:0002182">
    <property type="term" value="P:cytoplasmic translational elongation"/>
    <property type="evidence" value="ECO:0007669"/>
    <property type="project" value="InterPro"/>
</dbReference>
<dbReference type="CDD" id="cd05833">
    <property type="entry name" value="Ribosomal_P2"/>
    <property type="match status" value="1"/>
</dbReference>
<dbReference type="FunFam" id="1.10.10.1410:FF:000002">
    <property type="entry name" value="60S acidic ribosomal protein P2"/>
    <property type="match status" value="1"/>
</dbReference>
<dbReference type="Gene3D" id="1.10.10.1410">
    <property type="match status" value="1"/>
</dbReference>
<dbReference type="HAMAP" id="MF_01478">
    <property type="entry name" value="Ribosomal_L12_arch"/>
    <property type="match status" value="1"/>
</dbReference>
<dbReference type="InterPro" id="IPR038716">
    <property type="entry name" value="P1/P2_N_sf"/>
</dbReference>
<dbReference type="InterPro" id="IPR027534">
    <property type="entry name" value="Ribosomal_P1/P2"/>
</dbReference>
<dbReference type="InterPro" id="IPR044076">
    <property type="entry name" value="Ribosomal_P2"/>
</dbReference>
<dbReference type="PANTHER" id="PTHR21141">
    <property type="entry name" value="60S ACIDIC RIBOSOMAL PROTEIN FAMILY MEMBER"/>
    <property type="match status" value="1"/>
</dbReference>
<dbReference type="PANTHER" id="PTHR21141:SF5">
    <property type="entry name" value="LARGE RIBOSOMAL SUBUNIT PROTEIN P2"/>
    <property type="match status" value="1"/>
</dbReference>
<dbReference type="Pfam" id="PF00428">
    <property type="entry name" value="Ribosomal_60s"/>
    <property type="match status" value="1"/>
</dbReference>
<protein>
    <recommendedName>
        <fullName evidence="3">Large ribosomal subunit protein P2</fullName>
    </recommendedName>
    <alternativeName>
        <fullName>60S acidic ribosomal protein P2</fullName>
    </alternativeName>
</protein>
<keyword id="KW-0597">Phosphoprotein</keyword>
<keyword id="KW-1185">Reference proteome</keyword>
<keyword id="KW-0687">Ribonucleoprotein</keyword>
<keyword id="KW-0689">Ribosomal protein</keyword>
<proteinExistence type="inferred from homology"/>
<evidence type="ECO:0000250" key="1"/>
<evidence type="ECO:0000256" key="2">
    <source>
        <dbReference type="SAM" id="MobiDB-lite"/>
    </source>
</evidence>
<evidence type="ECO:0000305" key="3"/>
<accession>O00806</accession>
<organism>
    <name type="scientific">Plasmodium falciparum (isolate 3D7)</name>
    <dbReference type="NCBI Taxonomy" id="36329"/>
    <lineage>
        <taxon>Eukaryota</taxon>
        <taxon>Sar</taxon>
        <taxon>Alveolata</taxon>
        <taxon>Apicomplexa</taxon>
        <taxon>Aconoidasida</taxon>
        <taxon>Haemosporida</taxon>
        <taxon>Plasmodiidae</taxon>
        <taxon>Plasmodium</taxon>
        <taxon>Plasmodium (Laverania)</taxon>
    </lineage>
</organism>